<sequence length="874" mass="100797">MIDTSTITNPQTLPVEAITQENLRNTLEQFAEQQKQQFIQHRPVTDLVLSRSTFIDKLLIRLWEHYEVNQYPDIALVAVGGYGRGELHPLSDVDILILSAQPLSDETGRIVSKFLTFLWDLRLEVGHSVRTIDDCIEIGNDDLTVATNLTEARILCGSEDVFQCLQERINAGNFWPSEDFYRAKLEEQKTRHARYHDTTYNLEPDIKSSPGGLRDIHTLSWVARRHFGATSLLEMSRFGFLTDAEYRELVECQDSLWRIRFALHIELRRYDNRLTFSHQPSVAENLGYTGEGNRGVEMMMKEFYRTLRRVLELNKMLLQLFDQAILDNGKTVETIQLSDDFQIRGHLIEATKPALFQARPETILDMFLHIAQNGDIEGIAAPTLRQLRTARQRLNVFLVDIPEAREKFMELVRQPNTLQKAFRLMHRHGVLSAYLPQWSQIVGQMQFDLFHVYTVDEHSVRLIKNLNKFNDPENRERHPICCEVYPRIIKKELLTIAAIFHDIAKGRGGDHSELGAIEARKFCIQHGLSRPETNLIAWLVQKHLLMSVTAQRRDIYDPEVVAEFAKEVRDEERLDYLICLTVADICATNQELWNSWKRTLLAELYYSTQKALRRGLENTPDVRDRIRHNQQLSSAILRGKGFAPREIEVLWKRFKADYFLRHTHKQLAWHAEALLTHDHDKPLILLSKKATRGGTEVFVYNKDKAKLFAIVVSELDKKNLSVHDAQIMNSKDGYTLDTFMVLDPSGKTIPENRHNTIRRALVNALTKMKSERKNKRAPRKLMHFNVKTQVDFLPTKTGKKTTMELIALDTPGLLARIGAVFAKQKVSLQAAKITTIGERAEDFFILVNEHGSPLTEEHQQALKEALIIKLTPQD</sequence>
<organism>
    <name type="scientific">Photobacterium profundum (strain SS9)</name>
    <dbReference type="NCBI Taxonomy" id="298386"/>
    <lineage>
        <taxon>Bacteria</taxon>
        <taxon>Pseudomonadati</taxon>
        <taxon>Pseudomonadota</taxon>
        <taxon>Gammaproteobacteria</taxon>
        <taxon>Vibrionales</taxon>
        <taxon>Vibrionaceae</taxon>
        <taxon>Photobacterium</taxon>
    </lineage>
</organism>
<reference key="1">
    <citation type="journal article" date="2005" name="Science">
        <title>Life at depth: Photobacterium profundum genome sequence and expression analysis.</title>
        <authorList>
            <person name="Vezzi A."/>
            <person name="Campanaro S."/>
            <person name="D'Angelo M."/>
            <person name="Simonato F."/>
            <person name="Vitulo N."/>
            <person name="Lauro F.M."/>
            <person name="Cestaro A."/>
            <person name="Malacrida G."/>
            <person name="Simionati B."/>
            <person name="Cannata N."/>
            <person name="Romualdi C."/>
            <person name="Bartlett D.H."/>
            <person name="Valle G."/>
        </authorList>
    </citation>
    <scope>NUCLEOTIDE SEQUENCE [LARGE SCALE GENOMIC DNA]</scope>
    <source>
        <strain>ATCC BAA-1253 / SS9</strain>
    </source>
</reference>
<proteinExistence type="inferred from homology"/>
<feature type="chain" id="PRO_0000192750" description="Bifunctional uridylyltransferase/uridylyl-removing enzyme">
    <location>
        <begin position="1"/>
        <end position="874"/>
    </location>
</feature>
<feature type="domain" description="HD" evidence="2">
    <location>
        <begin position="455"/>
        <end position="577"/>
    </location>
</feature>
<feature type="domain" description="ACT 1" evidence="1">
    <location>
        <begin position="696"/>
        <end position="779"/>
    </location>
</feature>
<feature type="domain" description="ACT 2" evidence="1">
    <location>
        <begin position="802"/>
        <end position="874"/>
    </location>
</feature>
<feature type="region of interest" description="Uridylyltransferase">
    <location>
        <begin position="1"/>
        <end position="336"/>
    </location>
</feature>
<feature type="region of interest" description="Uridylyl-removing">
    <location>
        <begin position="337"/>
        <end position="695"/>
    </location>
</feature>
<name>GLND_PHOPR</name>
<gene>
    <name evidence="1" type="primary">glnD</name>
    <name type="ordered locus">PBPRA2970</name>
</gene>
<protein>
    <recommendedName>
        <fullName evidence="1">Bifunctional uridylyltransferase/uridylyl-removing enzyme</fullName>
        <shortName evidence="1">UTase/UR</shortName>
    </recommendedName>
    <alternativeName>
        <fullName evidence="1">Bifunctional [protein-PII] modification enzyme</fullName>
    </alternativeName>
    <alternativeName>
        <fullName evidence="1">Bifunctional nitrogen sensor protein</fullName>
    </alternativeName>
    <domain>
        <recommendedName>
            <fullName evidence="1">[Protein-PII] uridylyltransferase</fullName>
            <shortName evidence="1">PII uridylyltransferase</shortName>
            <shortName evidence="1">UTase</shortName>
            <ecNumber evidence="1">2.7.7.59</ecNumber>
        </recommendedName>
    </domain>
    <domain>
        <recommendedName>
            <fullName evidence="1">[Protein-PII]-UMP uridylyl-removing enzyme</fullName>
            <shortName evidence="1">UR</shortName>
            <ecNumber evidence="1">3.1.4.-</ecNumber>
        </recommendedName>
    </domain>
</protein>
<dbReference type="EC" id="2.7.7.59" evidence="1"/>
<dbReference type="EC" id="3.1.4.-" evidence="1"/>
<dbReference type="EMBL" id="CR378672">
    <property type="protein sequence ID" value="CAG21304.1"/>
    <property type="molecule type" value="Genomic_DNA"/>
</dbReference>
<dbReference type="RefSeq" id="WP_011219571.1">
    <property type="nucleotide sequence ID" value="NC_006370.1"/>
</dbReference>
<dbReference type="SMR" id="Q6LN22"/>
<dbReference type="STRING" id="298386.PBPRA2970"/>
<dbReference type="KEGG" id="ppr:PBPRA2970"/>
<dbReference type="eggNOG" id="COG2844">
    <property type="taxonomic scope" value="Bacteria"/>
</dbReference>
<dbReference type="HOGENOM" id="CLU_012833_0_0_6"/>
<dbReference type="Proteomes" id="UP000000593">
    <property type="component" value="Chromosome 1"/>
</dbReference>
<dbReference type="GO" id="GO:0008773">
    <property type="term" value="F:[protein-PII] uridylyltransferase activity"/>
    <property type="evidence" value="ECO:0007669"/>
    <property type="project" value="UniProtKB-UniRule"/>
</dbReference>
<dbReference type="GO" id="GO:0008081">
    <property type="term" value="F:phosphoric diester hydrolase activity"/>
    <property type="evidence" value="ECO:0007669"/>
    <property type="project" value="UniProtKB-UniRule"/>
</dbReference>
<dbReference type="GO" id="GO:0006808">
    <property type="term" value="P:regulation of nitrogen utilization"/>
    <property type="evidence" value="ECO:0007669"/>
    <property type="project" value="UniProtKB-UniRule"/>
</dbReference>
<dbReference type="CDD" id="cd04899">
    <property type="entry name" value="ACT_ACR-UUR-like_2"/>
    <property type="match status" value="1"/>
</dbReference>
<dbReference type="CDD" id="cd04900">
    <property type="entry name" value="ACT_UUR-like_1"/>
    <property type="match status" value="1"/>
</dbReference>
<dbReference type="CDD" id="cd00077">
    <property type="entry name" value="HDc"/>
    <property type="match status" value="1"/>
</dbReference>
<dbReference type="CDD" id="cd05401">
    <property type="entry name" value="NT_GlnE_GlnD_like"/>
    <property type="match status" value="1"/>
</dbReference>
<dbReference type="Gene3D" id="1.10.3210.10">
    <property type="entry name" value="Hypothetical protein af1432"/>
    <property type="match status" value="1"/>
</dbReference>
<dbReference type="HAMAP" id="MF_00277">
    <property type="entry name" value="PII_uridylyl_transf"/>
    <property type="match status" value="1"/>
</dbReference>
<dbReference type="InterPro" id="IPR045865">
    <property type="entry name" value="ACT-like_dom_sf"/>
</dbReference>
<dbReference type="InterPro" id="IPR002912">
    <property type="entry name" value="ACT_dom"/>
</dbReference>
<dbReference type="InterPro" id="IPR003607">
    <property type="entry name" value="HD/PDEase_dom"/>
</dbReference>
<dbReference type="InterPro" id="IPR006674">
    <property type="entry name" value="HD_domain"/>
</dbReference>
<dbReference type="InterPro" id="IPR043519">
    <property type="entry name" value="NT_sf"/>
</dbReference>
<dbReference type="InterPro" id="IPR013546">
    <property type="entry name" value="PII_UdlTrfase/GS_AdlTrfase"/>
</dbReference>
<dbReference type="InterPro" id="IPR002934">
    <property type="entry name" value="Polymerase_NTP_transf_dom"/>
</dbReference>
<dbReference type="InterPro" id="IPR010043">
    <property type="entry name" value="UTase/UR"/>
</dbReference>
<dbReference type="NCBIfam" id="NF002487">
    <property type="entry name" value="PRK01759.1"/>
    <property type="match status" value="1"/>
</dbReference>
<dbReference type="NCBIfam" id="NF003448">
    <property type="entry name" value="PRK05007.1"/>
    <property type="match status" value="1"/>
</dbReference>
<dbReference type="NCBIfam" id="TIGR01693">
    <property type="entry name" value="UTase_glnD"/>
    <property type="match status" value="1"/>
</dbReference>
<dbReference type="PANTHER" id="PTHR47320">
    <property type="entry name" value="BIFUNCTIONAL URIDYLYLTRANSFERASE/URIDYLYL-REMOVING ENZYME"/>
    <property type="match status" value="1"/>
</dbReference>
<dbReference type="PANTHER" id="PTHR47320:SF1">
    <property type="entry name" value="BIFUNCTIONAL URIDYLYLTRANSFERASE_URIDYLYL-REMOVING ENZYME"/>
    <property type="match status" value="1"/>
</dbReference>
<dbReference type="Pfam" id="PF01842">
    <property type="entry name" value="ACT"/>
    <property type="match status" value="1"/>
</dbReference>
<dbReference type="Pfam" id="PF08335">
    <property type="entry name" value="GlnD_UR_UTase"/>
    <property type="match status" value="1"/>
</dbReference>
<dbReference type="Pfam" id="PF01966">
    <property type="entry name" value="HD"/>
    <property type="match status" value="1"/>
</dbReference>
<dbReference type="Pfam" id="PF01909">
    <property type="entry name" value="NTP_transf_2"/>
    <property type="match status" value="1"/>
</dbReference>
<dbReference type="PIRSF" id="PIRSF006288">
    <property type="entry name" value="PII_uridyltransf"/>
    <property type="match status" value="1"/>
</dbReference>
<dbReference type="SMART" id="SM00471">
    <property type="entry name" value="HDc"/>
    <property type="match status" value="1"/>
</dbReference>
<dbReference type="SUPFAM" id="SSF55021">
    <property type="entry name" value="ACT-like"/>
    <property type="match status" value="1"/>
</dbReference>
<dbReference type="SUPFAM" id="SSF109604">
    <property type="entry name" value="HD-domain/PDEase-like"/>
    <property type="match status" value="1"/>
</dbReference>
<dbReference type="SUPFAM" id="SSF81301">
    <property type="entry name" value="Nucleotidyltransferase"/>
    <property type="match status" value="1"/>
</dbReference>
<dbReference type="SUPFAM" id="SSF81593">
    <property type="entry name" value="Nucleotidyltransferase substrate binding subunit/domain"/>
    <property type="match status" value="1"/>
</dbReference>
<dbReference type="PROSITE" id="PS51671">
    <property type="entry name" value="ACT"/>
    <property type="match status" value="2"/>
</dbReference>
<dbReference type="PROSITE" id="PS51831">
    <property type="entry name" value="HD"/>
    <property type="match status" value="1"/>
</dbReference>
<keyword id="KW-0378">Hydrolase</keyword>
<keyword id="KW-0460">Magnesium</keyword>
<keyword id="KW-0511">Multifunctional enzyme</keyword>
<keyword id="KW-0548">Nucleotidyltransferase</keyword>
<keyword id="KW-1185">Reference proteome</keyword>
<keyword id="KW-0677">Repeat</keyword>
<keyword id="KW-0808">Transferase</keyword>
<evidence type="ECO:0000255" key="1">
    <source>
        <dbReference type="HAMAP-Rule" id="MF_00277"/>
    </source>
</evidence>
<evidence type="ECO:0000255" key="2">
    <source>
        <dbReference type="PROSITE-ProRule" id="PRU01175"/>
    </source>
</evidence>
<comment type="function">
    <text evidence="1">Modifies, by uridylylation and deuridylylation, the PII regulatory proteins (GlnB and homologs), in response to the nitrogen status of the cell that GlnD senses through the glutamine level. Under low glutamine levels, catalyzes the conversion of the PII proteins and UTP to PII-UMP and PPi, while under higher glutamine levels, GlnD hydrolyzes PII-UMP to PII and UMP (deuridylylation). Thus, controls uridylylation state and activity of the PII proteins, and plays an important role in the regulation of nitrogen assimilation and metabolism.</text>
</comment>
<comment type="catalytic activity">
    <reaction evidence="1">
        <text>[protein-PII]-L-tyrosine + UTP = [protein-PII]-uridylyl-L-tyrosine + diphosphate</text>
        <dbReference type="Rhea" id="RHEA:13673"/>
        <dbReference type="Rhea" id="RHEA-COMP:12147"/>
        <dbReference type="Rhea" id="RHEA-COMP:12148"/>
        <dbReference type="ChEBI" id="CHEBI:33019"/>
        <dbReference type="ChEBI" id="CHEBI:46398"/>
        <dbReference type="ChEBI" id="CHEBI:46858"/>
        <dbReference type="ChEBI" id="CHEBI:90602"/>
        <dbReference type="EC" id="2.7.7.59"/>
    </reaction>
</comment>
<comment type="catalytic activity">
    <reaction evidence="1">
        <text>[protein-PII]-uridylyl-L-tyrosine + H2O = [protein-PII]-L-tyrosine + UMP + H(+)</text>
        <dbReference type="Rhea" id="RHEA:48600"/>
        <dbReference type="Rhea" id="RHEA-COMP:12147"/>
        <dbReference type="Rhea" id="RHEA-COMP:12148"/>
        <dbReference type="ChEBI" id="CHEBI:15377"/>
        <dbReference type="ChEBI" id="CHEBI:15378"/>
        <dbReference type="ChEBI" id="CHEBI:46858"/>
        <dbReference type="ChEBI" id="CHEBI:57865"/>
        <dbReference type="ChEBI" id="CHEBI:90602"/>
    </reaction>
</comment>
<comment type="cofactor">
    <cofactor evidence="1">
        <name>Mg(2+)</name>
        <dbReference type="ChEBI" id="CHEBI:18420"/>
    </cofactor>
</comment>
<comment type="activity regulation">
    <text evidence="1">Uridylyltransferase (UTase) activity is inhibited by glutamine, while glutamine activates uridylyl-removing (UR) activity.</text>
</comment>
<comment type="domain">
    <text evidence="1">Has four distinct domains: an N-terminal nucleotidyltransferase (NT) domain responsible for UTase activity, a central HD domain that encodes UR activity, and two C-terminal ACT domains that seem to have a role in glutamine sensing.</text>
</comment>
<comment type="similarity">
    <text evidence="1">Belongs to the GlnD family.</text>
</comment>
<accession>Q6LN22</accession>